<keyword id="KW-0012">Acyltransferase</keyword>
<keyword id="KW-0441">Lipid A biosynthesis</keyword>
<keyword id="KW-0444">Lipid biosynthesis</keyword>
<keyword id="KW-0443">Lipid metabolism</keyword>
<keyword id="KW-0677">Repeat</keyword>
<keyword id="KW-0808">Transferase</keyword>
<name>LPXD_COXB1</name>
<reference key="1">
    <citation type="journal article" date="2009" name="Infect. Immun.">
        <title>Comparative genomics reveal extensive transposon-mediated genomic plasticity and diversity among potential effector proteins within the genus Coxiella.</title>
        <authorList>
            <person name="Beare P.A."/>
            <person name="Unsworth N."/>
            <person name="Andoh M."/>
            <person name="Voth D.E."/>
            <person name="Omsland A."/>
            <person name="Gilk S.D."/>
            <person name="Williams K.P."/>
            <person name="Sobral B.W."/>
            <person name="Kupko J.J. III"/>
            <person name="Porcella S.F."/>
            <person name="Samuel J.E."/>
            <person name="Heinzen R.A."/>
        </authorList>
    </citation>
    <scope>NUCLEOTIDE SEQUENCE [LARGE SCALE GENOMIC DNA]</scope>
    <source>
        <strain>CbuK_Q154</strain>
    </source>
</reference>
<feature type="chain" id="PRO_1000127671" description="UDP-3-O-acylglucosamine N-acyltransferase">
    <location>
        <begin position="1"/>
        <end position="342"/>
    </location>
</feature>
<feature type="active site" description="Proton acceptor" evidence="1">
    <location>
        <position position="243"/>
    </location>
</feature>
<accession>B6J8K9</accession>
<dbReference type="EC" id="2.3.1.191" evidence="1"/>
<dbReference type="EMBL" id="CP001020">
    <property type="protein sequence ID" value="ACJ20608.1"/>
    <property type="molecule type" value="Genomic_DNA"/>
</dbReference>
<dbReference type="RefSeq" id="WP_005771660.1">
    <property type="nucleotide sequence ID" value="NC_011528.1"/>
</dbReference>
<dbReference type="SMR" id="B6J8K9"/>
<dbReference type="KEGG" id="cbc:CbuK_1437"/>
<dbReference type="HOGENOM" id="CLU_049865_0_1_6"/>
<dbReference type="UniPathway" id="UPA00973"/>
<dbReference type="GO" id="GO:0016020">
    <property type="term" value="C:membrane"/>
    <property type="evidence" value="ECO:0007669"/>
    <property type="project" value="GOC"/>
</dbReference>
<dbReference type="GO" id="GO:0016410">
    <property type="term" value="F:N-acyltransferase activity"/>
    <property type="evidence" value="ECO:0007669"/>
    <property type="project" value="InterPro"/>
</dbReference>
<dbReference type="GO" id="GO:0009245">
    <property type="term" value="P:lipid A biosynthetic process"/>
    <property type="evidence" value="ECO:0007669"/>
    <property type="project" value="UniProtKB-UniRule"/>
</dbReference>
<dbReference type="CDD" id="cd03352">
    <property type="entry name" value="LbH_LpxD"/>
    <property type="match status" value="1"/>
</dbReference>
<dbReference type="Gene3D" id="1.20.5.170">
    <property type="match status" value="1"/>
</dbReference>
<dbReference type="Gene3D" id="2.160.10.10">
    <property type="entry name" value="Hexapeptide repeat proteins"/>
    <property type="match status" value="1"/>
</dbReference>
<dbReference type="Gene3D" id="3.40.1390.10">
    <property type="entry name" value="MurE/MurF, N-terminal domain"/>
    <property type="match status" value="1"/>
</dbReference>
<dbReference type="HAMAP" id="MF_00523">
    <property type="entry name" value="LpxD"/>
    <property type="match status" value="1"/>
</dbReference>
<dbReference type="InterPro" id="IPR001451">
    <property type="entry name" value="Hexapep"/>
</dbReference>
<dbReference type="InterPro" id="IPR007691">
    <property type="entry name" value="LpxD"/>
</dbReference>
<dbReference type="InterPro" id="IPR011004">
    <property type="entry name" value="Trimer_LpxA-like_sf"/>
</dbReference>
<dbReference type="InterPro" id="IPR020573">
    <property type="entry name" value="UDP_GlcNAc_AcTrfase_non-rep"/>
</dbReference>
<dbReference type="NCBIfam" id="TIGR01853">
    <property type="entry name" value="lipid_A_lpxD"/>
    <property type="match status" value="1"/>
</dbReference>
<dbReference type="NCBIfam" id="NF002060">
    <property type="entry name" value="PRK00892.1"/>
    <property type="match status" value="1"/>
</dbReference>
<dbReference type="PANTHER" id="PTHR43378">
    <property type="entry name" value="UDP-3-O-ACYLGLUCOSAMINE N-ACYLTRANSFERASE"/>
    <property type="match status" value="1"/>
</dbReference>
<dbReference type="PANTHER" id="PTHR43378:SF2">
    <property type="entry name" value="UDP-3-O-ACYLGLUCOSAMINE N-ACYLTRANSFERASE 1, MITOCHONDRIAL-RELATED"/>
    <property type="match status" value="1"/>
</dbReference>
<dbReference type="Pfam" id="PF00132">
    <property type="entry name" value="Hexapep"/>
    <property type="match status" value="3"/>
</dbReference>
<dbReference type="Pfam" id="PF14602">
    <property type="entry name" value="Hexapep_2"/>
    <property type="match status" value="1"/>
</dbReference>
<dbReference type="Pfam" id="PF04613">
    <property type="entry name" value="LpxD"/>
    <property type="match status" value="1"/>
</dbReference>
<dbReference type="SUPFAM" id="SSF51161">
    <property type="entry name" value="Trimeric LpxA-like enzymes"/>
    <property type="match status" value="1"/>
</dbReference>
<comment type="function">
    <text evidence="1">Catalyzes the N-acylation of UDP-3-O-acylglucosamine using 3-hydroxyacyl-ACP as the acyl donor. Is involved in the biosynthesis of lipid A, a phosphorylated glycolipid that anchors the lipopolysaccharide to the outer membrane of the cell.</text>
</comment>
<comment type="catalytic activity">
    <reaction evidence="1">
        <text>a UDP-3-O-[(3R)-3-hydroxyacyl]-alpha-D-glucosamine + a (3R)-hydroxyacyl-[ACP] = a UDP-2-N,3-O-bis[(3R)-3-hydroxyacyl]-alpha-D-glucosamine + holo-[ACP] + H(+)</text>
        <dbReference type="Rhea" id="RHEA:53836"/>
        <dbReference type="Rhea" id="RHEA-COMP:9685"/>
        <dbReference type="Rhea" id="RHEA-COMP:9945"/>
        <dbReference type="ChEBI" id="CHEBI:15378"/>
        <dbReference type="ChEBI" id="CHEBI:64479"/>
        <dbReference type="ChEBI" id="CHEBI:78827"/>
        <dbReference type="ChEBI" id="CHEBI:137740"/>
        <dbReference type="ChEBI" id="CHEBI:137748"/>
        <dbReference type="EC" id="2.3.1.191"/>
    </reaction>
</comment>
<comment type="pathway">
    <text evidence="1">Bacterial outer membrane biogenesis; LPS lipid A biosynthesis.</text>
</comment>
<comment type="subunit">
    <text evidence="1">Homotrimer.</text>
</comment>
<comment type="similarity">
    <text evidence="1">Belongs to the transferase hexapeptide repeat family. LpxD subfamily.</text>
</comment>
<evidence type="ECO:0000255" key="1">
    <source>
        <dbReference type="HAMAP-Rule" id="MF_00523"/>
    </source>
</evidence>
<protein>
    <recommendedName>
        <fullName evidence="1">UDP-3-O-acylglucosamine N-acyltransferase</fullName>
        <ecNumber evidence="1">2.3.1.191</ecNumber>
    </recommendedName>
</protein>
<proteinExistence type="inferred from homology"/>
<sequence length="342" mass="36272">MTRGLTYSLTELATAIGATVQGDGDCKIHNVAAIAQAQPGEISFVTDRKYRKYLTQTKASAILLDEKLASRCPINALVMSNPKLGFAKLLTLLRPQSLPTGGIHPTAVVGANCQIDPSAHIGAHVVIEEDVVIGPRTLIGAGASIGRGSQIGSDCCLHSRVTLYSQTRIGDRSIIHSGAVIGADGFGLIQDEKGEWVKIPQVGRVIIGDDVEIGANATIDRGALDDTVIGNGVKIDDLVMIAHNVRIGDHTVIAGCAGVAGSTTVGRHCMIGASAGLNGHIEICDNVIITGMGMIQKSITKPGIYSSGTGMQTNREWRKSVIRFWQLDELAKRLKRLEKLIR</sequence>
<gene>
    <name evidence="1" type="primary">lpxD</name>
    <name type="ordered locus">CbuK_1437</name>
</gene>
<organism>
    <name type="scientific">Coxiella burnetii (strain CbuK_Q154)</name>
    <name type="common">Coxiella burnetii (strain Q154)</name>
    <dbReference type="NCBI Taxonomy" id="434924"/>
    <lineage>
        <taxon>Bacteria</taxon>
        <taxon>Pseudomonadati</taxon>
        <taxon>Pseudomonadota</taxon>
        <taxon>Gammaproteobacteria</taxon>
        <taxon>Legionellales</taxon>
        <taxon>Coxiellaceae</taxon>
        <taxon>Coxiella</taxon>
    </lineage>
</organism>